<gene>
    <name type="primary">Krt17</name>
    <name type="synonym">Krt1-17</name>
</gene>
<reference key="1">
    <citation type="journal article" date="1998" name="J. Cell Biol.">
        <title>Onset of keratin 17 expression coincides with the definition of major epithelial lineages during skin development.</title>
        <authorList>
            <person name="McGowan K.M."/>
            <person name="Coulombe P.A."/>
        </authorList>
    </citation>
    <scope>NUCLEOTIDE SEQUENCE [GENOMIC DNA / MRNA]</scope>
    <scope>FUNCTION</scope>
    <scope>DEVELOPMENTAL STAGE</scope>
    <scope>INDUCTION</scope>
    <source>
        <strain>129/SvJ</strain>
    </source>
</reference>
<reference key="2">
    <citation type="journal article" date="1999" name="Genomics">
        <title>The genomic organization of type I keratin genes in mice.</title>
        <authorList>
            <person name="Sato H."/>
            <person name="Koide T."/>
            <person name="Sagai T."/>
            <person name="Ishiguro S."/>
            <person name="Tamai M."/>
            <person name="Saitou N."/>
            <person name="Shiroishi T."/>
        </authorList>
    </citation>
    <scope>NUCLEOTIDE SEQUENCE [MRNA]</scope>
    <source>
        <strain>C57BL/10J</strain>
        <tissue>Skin</tissue>
    </source>
</reference>
<reference key="3">
    <citation type="journal article" date="2009" name="PLoS Biol.">
        <title>Lineage-specific biology revealed by a finished genome assembly of the mouse.</title>
        <authorList>
            <person name="Church D.M."/>
            <person name="Goodstadt L."/>
            <person name="Hillier L.W."/>
            <person name="Zody M.C."/>
            <person name="Goldstein S."/>
            <person name="She X."/>
            <person name="Bult C.J."/>
            <person name="Agarwala R."/>
            <person name="Cherry J.L."/>
            <person name="DiCuccio M."/>
            <person name="Hlavina W."/>
            <person name="Kapustin Y."/>
            <person name="Meric P."/>
            <person name="Maglott D."/>
            <person name="Birtle Z."/>
            <person name="Marques A.C."/>
            <person name="Graves T."/>
            <person name="Zhou S."/>
            <person name="Teague B."/>
            <person name="Potamousis K."/>
            <person name="Churas C."/>
            <person name="Place M."/>
            <person name="Herschleb J."/>
            <person name="Runnheim R."/>
            <person name="Forrest D."/>
            <person name="Amos-Landgraf J."/>
            <person name="Schwartz D.C."/>
            <person name="Cheng Z."/>
            <person name="Lindblad-Toh K."/>
            <person name="Eichler E.E."/>
            <person name="Ponting C.P."/>
        </authorList>
    </citation>
    <scope>NUCLEOTIDE SEQUENCE [LARGE SCALE GENOMIC DNA]</scope>
    <source>
        <strain>C57BL/6J</strain>
    </source>
</reference>
<reference key="4">
    <citation type="journal article" date="2004" name="Genome Res.">
        <title>The status, quality, and expansion of the NIH full-length cDNA project: the Mammalian Gene Collection (MGC).</title>
        <authorList>
            <consortium name="The MGC Project Team"/>
        </authorList>
    </citation>
    <scope>NUCLEOTIDE SEQUENCE [LARGE SCALE MRNA]</scope>
    <source>
        <tissue>Lung</tissue>
    </source>
</reference>
<reference key="5">
    <citation type="submission" date="2009-01" db="UniProtKB">
        <authorList>
            <person name="Lubec G."/>
            <person name="Sunyer B."/>
            <person name="Chen W.-Q."/>
        </authorList>
    </citation>
    <scope>PROTEIN SEQUENCE OF 95-101; 164-170; 285-297 AND 377-385</scope>
    <scope>IDENTIFICATION BY MASS SPECTROMETRY</scope>
    <source>
        <strain>OF1</strain>
        <tissue>Hippocampus</tissue>
    </source>
</reference>
<reference key="6">
    <citation type="journal article" date="1987" name="J. Biol. Chem.">
        <title>Three cDNA sequences of mouse type I keratins: cellular localization of the mRNAs in normal and hyperproliferative tissues.</title>
        <authorList>
            <person name="Knapp B."/>
            <person name="Rentrop M."/>
            <person name="Schweizer J."/>
            <person name="Winter H."/>
        </authorList>
    </citation>
    <scope>NUCLEOTIDE SEQUENCE [MRNA] OF 229-433</scope>
    <scope>TISSUE SPECIFICITY</scope>
    <scope>INDUCTION</scope>
    <source>
        <tissue>Skin</tissue>
    </source>
</reference>
<reference key="7">
    <citation type="journal article" date="2000" name="J. Invest. Dermatol.">
        <title>Keratin 17 expression in the hard epithelial context of the hair and nail, and its relevance for the pachyonychia congenita phenotype.</title>
        <authorList>
            <person name="McGowan K.M."/>
            <person name="Coulombe P.A."/>
        </authorList>
    </citation>
    <scope>TISSUE SPECIFICITY</scope>
</reference>
<reference key="8">
    <citation type="journal article" date="2001" name="Mol. Biol. Cell">
        <title>Complete cytolysis and neonatal lethality in keratin 5 knockout mice reveal its fundamental role in skin integrity and in epidermolysis bullosa simplex.</title>
        <authorList>
            <person name="Peters B."/>
            <person name="Kirfel J."/>
            <person name="Bussow H."/>
            <person name="Vidal M."/>
            <person name="Magin T.M."/>
        </authorList>
    </citation>
    <scope>DEVELOPMENTAL STAGE</scope>
</reference>
<reference key="9">
    <citation type="journal article" date="2002" name="Genes Dev.">
        <title>Keratin 17 null mice exhibit age- and strain-dependent alopecia.</title>
        <authorList>
            <person name="McGowan K.M."/>
            <person name="Tong X."/>
            <person name="Colucci-Guyon E."/>
            <person name="Langa F."/>
            <person name="Babinet C."/>
            <person name="Coulombe P.A."/>
        </authorList>
    </citation>
    <scope>DISRUPTION PHENOTYPE</scope>
</reference>
<reference key="10">
    <citation type="journal article" date="2003" name="Exp. Dermatol.">
        <title>In vivo alteration of the keratin 17 gene in hair follicles by oligonucleotide-directed gene targeting.</title>
        <authorList>
            <person name="Fan W."/>
            <person name="Yoon K."/>
        </authorList>
    </citation>
    <scope>FUNCTION</scope>
    <scope>TISSUE SPECIFICITY</scope>
    <scope>MUTAGENESIS OF ARG-94</scope>
</reference>
<reference key="11">
    <citation type="journal article" date="2006" name="Genes Dev.">
        <title>Keratin 17 modulates hair follicle cycling in a TNFalpha-dependent fashion.</title>
        <authorList>
            <person name="Tong X."/>
            <person name="Coulombe P.A."/>
        </authorList>
    </citation>
    <scope>FUNCTION</scope>
    <scope>INTERACTION WITH TRADD</scope>
    <scope>SUBCELLULAR LOCATION</scope>
</reference>
<reference key="12">
    <citation type="journal article" date="2006" name="Nature">
        <title>A keratin cytoskeletal protein regulates protein synthesis and epithelial cell growth.</title>
        <authorList>
            <person name="Kim S."/>
            <person name="Wong P."/>
            <person name="Coulombe P.A."/>
        </authorList>
    </citation>
    <scope>FUNCTION</scope>
    <scope>INTERACTION WITH SFN</scope>
    <scope>SUBCELLULAR LOCATION</scope>
    <scope>MUTAGENESIS OF THR-9 AND SER-44</scope>
</reference>
<reference key="13">
    <citation type="journal article" date="2010" name="Cell">
        <title>A tissue-specific atlas of mouse protein phosphorylation and expression.</title>
        <authorList>
            <person name="Huttlin E.L."/>
            <person name="Jedrychowski M.P."/>
            <person name="Elias J.E."/>
            <person name="Goswami T."/>
            <person name="Rad R."/>
            <person name="Beausoleil S.A."/>
            <person name="Villen J."/>
            <person name="Haas W."/>
            <person name="Sowa M.E."/>
            <person name="Gygi S.P."/>
        </authorList>
    </citation>
    <scope>PHOSPHORYLATION [LARGE SCALE ANALYSIS] AT SER-32 AND SER-39</scope>
    <scope>IDENTIFICATION BY MASS SPECTROMETRY [LARGE SCALE ANALYSIS]</scope>
    <source>
        <tissue>Brain</tissue>
        <tissue>Brown adipose tissue</tissue>
        <tissue>Heart</tissue>
        <tissue>Liver</tissue>
        <tissue>Lung</tissue>
        <tissue>Pancreas</tissue>
        <tissue>Testis</tissue>
    </source>
</reference>
<reference key="14">
    <citation type="journal article" date="2010" name="Nat. Genet.">
        <title>Keratin 17 promotes epithelial proliferation and tumor growth by polarizing the immune response in skin.</title>
        <authorList>
            <person name="Depianto D."/>
            <person name="Kerns M.L."/>
            <person name="Dlugosz A.A."/>
            <person name="Coulombe P.A."/>
        </authorList>
    </citation>
    <scope>FUNCTION</scope>
</reference>
<keyword id="KW-0175">Coiled coil</keyword>
<keyword id="KW-0963">Cytoplasm</keyword>
<keyword id="KW-0903">Direct protein sequencing</keyword>
<keyword id="KW-0403">Intermediate filament</keyword>
<keyword id="KW-1017">Isopeptide bond</keyword>
<keyword id="KW-0416">Keratin</keyword>
<keyword id="KW-0597">Phosphoprotein</keyword>
<keyword id="KW-1185">Reference proteome</keyword>
<keyword id="KW-0832">Ubl conjugation</keyword>
<dbReference type="EMBL" id="AB013608">
    <property type="protein sequence ID" value="BAA34229.1"/>
    <property type="molecule type" value="mRNA"/>
</dbReference>
<dbReference type="EMBL" id="AL590873">
    <property type="status" value="NOT_ANNOTATED_CDS"/>
    <property type="molecule type" value="Genomic_DNA"/>
</dbReference>
<dbReference type="EMBL" id="BC132454">
    <property type="protein sequence ID" value="AAI32455.1"/>
    <property type="molecule type" value="mRNA"/>
</dbReference>
<dbReference type="EMBL" id="BC132456">
    <property type="protein sequence ID" value="AAI32457.1"/>
    <property type="molecule type" value="mRNA"/>
</dbReference>
<dbReference type="EMBL" id="M13805">
    <property type="protein sequence ID" value="AAA39394.1"/>
    <property type="molecule type" value="mRNA"/>
</dbReference>
<dbReference type="CCDS" id="CCDS25415.1"/>
<dbReference type="PIR" id="C26135">
    <property type="entry name" value="C26135"/>
</dbReference>
<dbReference type="RefSeq" id="NP_034793.1">
    <property type="nucleotide sequence ID" value="NM_010663.3"/>
</dbReference>
<dbReference type="SMR" id="Q9QWL7"/>
<dbReference type="BioGRID" id="201022">
    <property type="interactions" value="15"/>
</dbReference>
<dbReference type="DIP" id="DIP-38042N"/>
<dbReference type="FunCoup" id="Q9QWL7">
    <property type="interactions" value="203"/>
</dbReference>
<dbReference type="IntAct" id="Q9QWL7">
    <property type="interactions" value="8"/>
</dbReference>
<dbReference type="MINT" id="Q9QWL7"/>
<dbReference type="STRING" id="10090.ENSMUSP00000079699"/>
<dbReference type="GlyGen" id="Q9QWL7">
    <property type="glycosylation" value="1 site, 1 O-linked glycan (1 site)"/>
</dbReference>
<dbReference type="iPTMnet" id="Q9QWL7"/>
<dbReference type="PhosphoSitePlus" id="Q9QWL7"/>
<dbReference type="SwissPalm" id="Q9QWL7"/>
<dbReference type="CPTAC" id="non-CPTAC-3467"/>
<dbReference type="jPOST" id="Q9QWL7"/>
<dbReference type="PaxDb" id="10090-ENSMUSP00000079699"/>
<dbReference type="PeptideAtlas" id="Q9QWL7"/>
<dbReference type="ProteomicsDB" id="268935"/>
<dbReference type="Antibodypedia" id="6491">
    <property type="antibodies" value="1309 antibodies from 46 providers"/>
</dbReference>
<dbReference type="DNASU" id="16667"/>
<dbReference type="Ensembl" id="ENSMUST00000080893.7">
    <property type="protein sequence ID" value="ENSMUSP00000079699.7"/>
    <property type="gene ID" value="ENSMUSG00000035557.10"/>
</dbReference>
<dbReference type="GeneID" id="16667"/>
<dbReference type="KEGG" id="mmu:16667"/>
<dbReference type="UCSC" id="uc007lks.1">
    <property type="organism name" value="mouse"/>
</dbReference>
<dbReference type="AGR" id="MGI:96691"/>
<dbReference type="CTD" id="3872"/>
<dbReference type="MGI" id="MGI:96691">
    <property type="gene designation" value="Krt17"/>
</dbReference>
<dbReference type="VEuPathDB" id="HostDB:ENSMUSG00000035557"/>
<dbReference type="eggNOG" id="ENOG502QTM6">
    <property type="taxonomic scope" value="Eukaryota"/>
</dbReference>
<dbReference type="GeneTree" id="ENSGT00940000160681"/>
<dbReference type="HOGENOM" id="CLU_012560_8_1_1"/>
<dbReference type="InParanoid" id="Q9QWL7"/>
<dbReference type="OMA" id="QYKTKEP"/>
<dbReference type="OrthoDB" id="2441647at2759"/>
<dbReference type="PhylomeDB" id="Q9QWL7"/>
<dbReference type="TreeFam" id="TF332742"/>
<dbReference type="Reactome" id="R-MMU-6805567">
    <property type="pathway name" value="Keratinization"/>
</dbReference>
<dbReference type="Reactome" id="R-MMU-6809371">
    <property type="pathway name" value="Formation of the cornified envelope"/>
</dbReference>
<dbReference type="BioGRID-ORCS" id="16667">
    <property type="hits" value="3 hits in 79 CRISPR screens"/>
</dbReference>
<dbReference type="ChiTaRS" id="Krt17">
    <property type="organism name" value="mouse"/>
</dbReference>
<dbReference type="PRO" id="PR:Q9QWL7"/>
<dbReference type="Proteomes" id="UP000000589">
    <property type="component" value="Chromosome 11"/>
</dbReference>
<dbReference type="RNAct" id="Q9QWL7">
    <property type="molecule type" value="protein"/>
</dbReference>
<dbReference type="Bgee" id="ENSMUSG00000035557">
    <property type="expression patterns" value="Expressed in lip and 79 other cell types or tissues"/>
</dbReference>
<dbReference type="GO" id="GO:0071944">
    <property type="term" value="C:cell periphery"/>
    <property type="evidence" value="ECO:0000314"/>
    <property type="project" value="MGI"/>
</dbReference>
<dbReference type="GO" id="GO:0001533">
    <property type="term" value="C:cornified envelope"/>
    <property type="evidence" value="ECO:0000314"/>
    <property type="project" value="MGI"/>
</dbReference>
<dbReference type="GO" id="GO:0005737">
    <property type="term" value="C:cytoplasm"/>
    <property type="evidence" value="ECO:0000314"/>
    <property type="project" value="UniProtKB"/>
</dbReference>
<dbReference type="GO" id="GO:0005882">
    <property type="term" value="C:intermediate filament"/>
    <property type="evidence" value="ECO:0007669"/>
    <property type="project" value="UniProtKB-KW"/>
</dbReference>
<dbReference type="GO" id="GO:0005198">
    <property type="term" value="F:structural molecule activity"/>
    <property type="evidence" value="ECO:0007669"/>
    <property type="project" value="InterPro"/>
</dbReference>
<dbReference type="GO" id="GO:0031069">
    <property type="term" value="P:hair follicle morphogenesis"/>
    <property type="evidence" value="ECO:0000315"/>
    <property type="project" value="UniProtKB"/>
</dbReference>
<dbReference type="GO" id="GO:0045109">
    <property type="term" value="P:intermediate filament organization"/>
    <property type="evidence" value="ECO:0000316"/>
    <property type="project" value="MGI"/>
</dbReference>
<dbReference type="GO" id="GO:0031424">
    <property type="term" value="P:keratinization"/>
    <property type="evidence" value="ECO:0000316"/>
    <property type="project" value="MGI"/>
</dbReference>
<dbReference type="GO" id="GO:0002009">
    <property type="term" value="P:morphogenesis of an epithelium"/>
    <property type="evidence" value="ECO:0000316"/>
    <property type="project" value="MGI"/>
</dbReference>
<dbReference type="GO" id="GO:0030307">
    <property type="term" value="P:positive regulation of cell growth"/>
    <property type="evidence" value="ECO:0000315"/>
    <property type="project" value="UniProtKB"/>
</dbReference>
<dbReference type="GO" id="GO:0051798">
    <property type="term" value="P:positive regulation of hair follicle development"/>
    <property type="evidence" value="ECO:0000315"/>
    <property type="project" value="UniProtKB"/>
</dbReference>
<dbReference type="GO" id="GO:0045727">
    <property type="term" value="P:positive regulation of translation"/>
    <property type="evidence" value="ECO:0000315"/>
    <property type="project" value="UniProtKB"/>
</dbReference>
<dbReference type="FunFam" id="1.20.5.1160:FF:000002">
    <property type="entry name" value="Type I keratin 10"/>
    <property type="match status" value="1"/>
</dbReference>
<dbReference type="FunFam" id="1.20.5.170:FF:000002">
    <property type="entry name" value="Type I keratin KA11"/>
    <property type="match status" value="1"/>
</dbReference>
<dbReference type="FunFam" id="1.20.5.500:FF:000001">
    <property type="entry name" value="Type II keratin 23"/>
    <property type="match status" value="1"/>
</dbReference>
<dbReference type="Gene3D" id="1.20.5.170">
    <property type="match status" value="1"/>
</dbReference>
<dbReference type="Gene3D" id="1.20.5.500">
    <property type="entry name" value="Single helix bin"/>
    <property type="match status" value="1"/>
</dbReference>
<dbReference type="Gene3D" id="1.20.5.1160">
    <property type="entry name" value="Vasodilator-stimulated phosphoprotein"/>
    <property type="match status" value="1"/>
</dbReference>
<dbReference type="InterPro" id="IPR018039">
    <property type="entry name" value="IF_conserved"/>
</dbReference>
<dbReference type="InterPro" id="IPR039008">
    <property type="entry name" value="IF_rod_dom"/>
</dbReference>
<dbReference type="InterPro" id="IPR002957">
    <property type="entry name" value="Keratin_I"/>
</dbReference>
<dbReference type="PANTHER" id="PTHR23239">
    <property type="entry name" value="INTERMEDIATE FILAMENT"/>
    <property type="match status" value="1"/>
</dbReference>
<dbReference type="PANTHER" id="PTHR23239:SF180">
    <property type="entry name" value="KERATIN, TYPE I CYTOSKELETAL 17"/>
    <property type="match status" value="1"/>
</dbReference>
<dbReference type="Pfam" id="PF00038">
    <property type="entry name" value="Filament"/>
    <property type="match status" value="1"/>
</dbReference>
<dbReference type="PRINTS" id="PR01248">
    <property type="entry name" value="TYPE1KERATIN"/>
</dbReference>
<dbReference type="SMART" id="SM01391">
    <property type="entry name" value="Filament"/>
    <property type="match status" value="1"/>
</dbReference>
<dbReference type="SUPFAM" id="SSF64593">
    <property type="entry name" value="Intermediate filament protein, coiled coil region"/>
    <property type="match status" value="2"/>
</dbReference>
<dbReference type="SUPFAM" id="SSF46579">
    <property type="entry name" value="Prefoldin"/>
    <property type="match status" value="1"/>
</dbReference>
<dbReference type="PROSITE" id="PS00226">
    <property type="entry name" value="IF_ROD_1"/>
    <property type="match status" value="1"/>
</dbReference>
<dbReference type="PROSITE" id="PS51842">
    <property type="entry name" value="IF_ROD_2"/>
    <property type="match status" value="1"/>
</dbReference>
<protein>
    <recommendedName>
        <fullName>Keratin, type I cytoskeletal 17</fullName>
    </recommendedName>
    <alternativeName>
        <fullName>Cytokeratin-17</fullName>
        <shortName>CK-17</shortName>
    </alternativeName>
    <alternativeName>
        <fullName>Keratin-17</fullName>
        <shortName>K17</shortName>
    </alternativeName>
</protein>
<organism>
    <name type="scientific">Mus musculus</name>
    <name type="common">Mouse</name>
    <dbReference type="NCBI Taxonomy" id="10090"/>
    <lineage>
        <taxon>Eukaryota</taxon>
        <taxon>Metazoa</taxon>
        <taxon>Chordata</taxon>
        <taxon>Craniata</taxon>
        <taxon>Vertebrata</taxon>
        <taxon>Euteleostomi</taxon>
        <taxon>Mammalia</taxon>
        <taxon>Eutheria</taxon>
        <taxon>Euarchontoglires</taxon>
        <taxon>Glires</taxon>
        <taxon>Rodentia</taxon>
        <taxon>Myomorpha</taxon>
        <taxon>Muroidea</taxon>
        <taxon>Muridae</taxon>
        <taxon>Murinae</taxon>
        <taxon>Mus</taxon>
        <taxon>Mus</taxon>
    </lineage>
</organism>
<sequence>MTTTIRQFTSSSSIKGSSGLGGGSSRTSCRLSGSLGAGSCRLGSASGLGSALGSNSYSSCYSFGTGSGYGGNFGGVDGLLAGGEKATMQNLNDRLASYLDKVRALEEANTELEVKIRDWYQKQAPGPARDYSAYYHTIEDLKNKILVATVDNASILLQIDNARLAADDFRTKFETEQALRMSVEADINGLRRVLDELTLARADLEMQIENLKEELAYLKKNHEEEMNALRGQVGGEINVEMDAAPGVDLSRILSEMRDQYEKMAEKNRKDAEDWFFSKTEELNREVATNSELVQSGKSEISELRRTMQALEIELQSQLSMKASLEGSLAETENRYCVQLSQIQGLIGSVEEQLAQLRCEMEQQNQEYKILLDVKTRLEQEIATYRRLLEGEDAHLTQYKPKEPVTTRQVRTIVEEVQDGKVISSREQVHQTTR</sequence>
<evidence type="ECO:0000250" key="1"/>
<evidence type="ECO:0000250" key="2">
    <source>
        <dbReference type="UniProtKB" id="Q04695"/>
    </source>
</evidence>
<evidence type="ECO:0000250" key="3">
    <source>
        <dbReference type="UniProtKB" id="Q61414"/>
    </source>
</evidence>
<evidence type="ECO:0000250" key="4">
    <source>
        <dbReference type="UniProtKB" id="Q6IFU8"/>
    </source>
</evidence>
<evidence type="ECO:0000250" key="5">
    <source>
        <dbReference type="UniProtKB" id="Q6IFV3"/>
    </source>
</evidence>
<evidence type="ECO:0000255" key="6">
    <source>
        <dbReference type="PROSITE-ProRule" id="PRU01188"/>
    </source>
</evidence>
<evidence type="ECO:0000256" key="7">
    <source>
        <dbReference type="SAM" id="MobiDB-lite"/>
    </source>
</evidence>
<evidence type="ECO:0000269" key="8">
    <source>
    </source>
</evidence>
<evidence type="ECO:0000269" key="9">
    <source>
    </source>
</evidence>
<evidence type="ECO:0000269" key="10">
    <source>
    </source>
</evidence>
<evidence type="ECO:0000269" key="11">
    <source>
    </source>
</evidence>
<evidence type="ECO:0000269" key="12">
    <source>
    </source>
</evidence>
<evidence type="ECO:0000269" key="13">
    <source>
    </source>
</evidence>
<evidence type="ECO:0000269" key="14">
    <source>
    </source>
</evidence>
<evidence type="ECO:0000269" key="15">
    <source>
    </source>
</evidence>
<evidence type="ECO:0000269" key="16">
    <source>
    </source>
</evidence>
<evidence type="ECO:0007744" key="17">
    <source>
    </source>
</evidence>
<comment type="function">
    <text evidence="11 12 13 14 16">Type I keratin involved in the formation and maintenance of various skin appendages, specifically in determining shape and orientation of hair (PubMed:14714564, PubMed:16702408). Required for the correct growth of hair follicles, in particular for the persistence of the anagen (growth) state (PubMed:16702408). Modulates the function of TNF-alpha in the specific context of hair cycling. Regulates protein synthesis and epithelial cell growth through binding to the adapter protein SFN and by stimulating Akt/mTOR pathway (PubMed:16710422). Involved in tissue repair. May be a marker of basal cell differentiation in complex epithelia and therefore indicative of a certain type of epithelial 'stem cells'. Acts as a promoter of epithelial proliferation by acting a regulator of immune response in skin: promotes Th1/Th17-dominated immune environment contributing to the development of basaloid skin tumors (PubMed:20871598). May act as an autoantigen in the immunopathogenesis of psoriasis, with certain peptide regions being a major target for autoreactive T-cells and hence causing their proliferation.</text>
</comment>
<comment type="subunit">
    <text evidence="1 12 13">Heterodimer of a type I and a type II keratin. KRT17 associates with KRT6 isomers (KRT6A or KRT6B) (By similarity). Interacts with TRADD and SFN.</text>
</comment>
<comment type="interaction">
    <interactant intactId="EBI-309015">
        <id>Q9QWL7</id>
    </interactant>
    <interactant intactId="EBI-1544118">
        <id>O70456</id>
        <label>Sfn</label>
    </interactant>
    <organismsDiffer>false</organismsDiffer>
    <experiments>3</experiments>
</comment>
<comment type="subcellular location">
    <subcellularLocation>
        <location evidence="12 13">Cytoplasm</location>
    </subcellularLocation>
</comment>
<comment type="tissue specificity">
    <text evidence="8 11 15">Expressed strongly in outer root sheath and medulla region of hair follicle and in the early differentiating epithelial cells (trichocytes) within the hair bulb region. Weak expression in the matrix cells of hair bulb. Also present in the sweat gland within the skin, vibrissae follicle, salivary gland, tooth and thymus.</text>
</comment>
<comment type="developmental stage">
    <text evidence="9 16">Expression first occurs in a subset of epithelial cells within the single-layered, undifferentiated ectoderm of embryonic day 10.5 mouse fetuses (PubMed:9786956). In the ensuing 48 hours, K17-expressing cells give rise to placodes, the precursors of ectoderm-derived appendages (hair, glands, and tooth), and to periderm (PubMed:9786956). Expressed in hair follicles and in the basal and suprabasal layers of the interfollicular epidermis at birth (PubMed:11408584).</text>
</comment>
<comment type="induction">
    <text evidence="15 16">Induced in damaged or stressed epidermis and by interferon-gamma. Up-regulated by LEF1.</text>
</comment>
<comment type="PTM">
    <text evidence="1">Phosphorylation at Ser-44 occurs in a growth- and stress-dependent fashion in skin keratinocytes, it has no effect on filament organization.</text>
</comment>
<comment type="disruption phenotype">
    <text evidence="10">Severe alopecia during the first week postbirth, correlating with hair fragility, alterations in follicular histology, and apoptosis in matrix cells.</text>
</comment>
<comment type="miscellaneous">
    <text>There are two types of cytoskeletal and microfibrillar keratin: I (acidic; 40-55 kDa) and II (neutral to basic; 56-70 kDa).</text>
</comment>
<comment type="similarity">
    <text evidence="6">Belongs to the intermediate filament family.</text>
</comment>
<name>K1C17_MOUSE</name>
<feature type="chain" id="PRO_0000063665" description="Keratin, type I cytoskeletal 17">
    <location>
        <begin position="1"/>
        <end position="433"/>
    </location>
</feature>
<feature type="domain" description="IF rod" evidence="6">
    <location>
        <begin position="84"/>
        <end position="395"/>
    </location>
</feature>
<feature type="region of interest" description="Head">
    <location>
        <begin position="1"/>
        <end position="83"/>
    </location>
</feature>
<feature type="region of interest" description="Disordered" evidence="7">
    <location>
        <begin position="1"/>
        <end position="24"/>
    </location>
</feature>
<feature type="region of interest" description="Coil 1A">
    <location>
        <begin position="84"/>
        <end position="120"/>
    </location>
</feature>
<feature type="region of interest" description="Linker 1">
    <location>
        <begin position="121"/>
        <end position="138"/>
    </location>
</feature>
<feature type="region of interest" description="Coil 1B">
    <location>
        <begin position="139"/>
        <end position="230"/>
    </location>
</feature>
<feature type="region of interest" description="Linker 12">
    <location>
        <begin position="231"/>
        <end position="250"/>
    </location>
</feature>
<feature type="region of interest" description="Coil 2">
    <location>
        <begin position="251"/>
        <end position="392"/>
    </location>
</feature>
<feature type="region of interest" description="Tail">
    <location>
        <begin position="393"/>
        <end position="433"/>
    </location>
</feature>
<feature type="modified residue" description="Phosphoserine" evidence="2">
    <location>
        <position position="12"/>
    </location>
</feature>
<feature type="modified residue" description="Phosphoserine" evidence="2">
    <location>
        <position position="13"/>
    </location>
</feature>
<feature type="modified residue" description="Phosphoserine" evidence="3">
    <location>
        <position position="25"/>
    </location>
</feature>
<feature type="modified residue" description="Phosphoserine" evidence="17">
    <location>
        <position position="32"/>
    </location>
</feature>
<feature type="modified residue" description="Phosphoserine" evidence="4">
    <location>
        <position position="34"/>
    </location>
</feature>
<feature type="modified residue" description="Phosphoserine" evidence="17">
    <location>
        <position position="39"/>
    </location>
</feature>
<feature type="modified residue" description="Phosphoserine; by RPS6KA1" evidence="2">
    <location>
        <position position="44"/>
    </location>
</feature>
<feature type="modified residue" description="Phosphothreonine" evidence="2">
    <location>
        <position position="110"/>
    </location>
</feature>
<feature type="modified residue" description="Phosphothreonine" evidence="5">
    <location>
        <position position="279"/>
    </location>
</feature>
<feature type="modified residue" description="Phosphoserine" evidence="2">
    <location>
        <position position="323"/>
    </location>
</feature>
<feature type="cross-link" description="Glycyl lysine isopeptide (Lys-Gly) (interchain with G-Cter in SUMO1); alternate" evidence="2">
    <location>
        <position position="15"/>
    </location>
</feature>
<feature type="cross-link" description="Glycyl lysine isopeptide (Lys-Gly) (interchain with G-Cter in SUMO2); alternate" evidence="2">
    <location>
        <position position="15"/>
    </location>
</feature>
<feature type="cross-link" description="Glycyl lysine isopeptide (Lys-Gly) (interchain with G-Cter in SUMO2)" evidence="2">
    <location>
        <position position="278"/>
    </location>
</feature>
<feature type="cross-link" description="Glycyl lysine isopeptide (Lys-Gly) (interchain with G-Cter in SUMO1); alternate" evidence="2">
    <location>
        <position position="399"/>
    </location>
</feature>
<feature type="cross-link" description="Glycyl lysine isopeptide (Lys-Gly) (interchain with G-Cter in SUMO2); alternate" evidence="2">
    <location>
        <position position="399"/>
    </location>
</feature>
<feature type="cross-link" description="Glycyl lysine isopeptide (Lys-Gly) (interchain with G-Cter in SUMO1); alternate" evidence="2">
    <location>
        <position position="401"/>
    </location>
</feature>
<feature type="cross-link" description="Glycyl lysine isopeptide (Lys-Gly) (interchain with G-Cter in SUMO2); alternate" evidence="2">
    <location>
        <position position="401"/>
    </location>
</feature>
<feature type="cross-link" description="Glycyl lysine isopeptide (Lys-Gly) (interchain with G-Cter in SUMO1); alternate" evidence="2">
    <location>
        <position position="420"/>
    </location>
</feature>
<feature type="cross-link" description="Glycyl lysine isopeptide (Lys-Gly) (interchain with G-Cter in SUMO2); alternate" evidence="2">
    <location>
        <position position="420"/>
    </location>
</feature>
<feature type="mutagenesis site" description="Reduces binding to SNF." evidence="13">
    <original>T</original>
    <variation>A</variation>
    <location>
        <position position="9"/>
    </location>
</feature>
<feature type="mutagenesis site" description="Reduces binding to SNF." evidence="13">
    <original>S</original>
    <variation>A</variation>
    <location>
        <position position="44"/>
    </location>
</feature>
<feature type="mutagenesis site" description="Causes twisted hair shafts, broken hair follicles at sebaceous gland level and occasional rupture of the hair bulb or epidermal cyst-like changes." evidence="11">
    <original>R</original>
    <variation>P</variation>
    <location>
        <position position="94"/>
    </location>
</feature>
<proteinExistence type="evidence at protein level"/>
<accession>Q9QWL7</accession>
<accession>A2A4G6</accession>
<accession>Q61783</accession>